<organism>
    <name type="scientific">Streptococcus pyogenes serotype M4 (strain MGAS10750)</name>
    <dbReference type="NCBI Taxonomy" id="370554"/>
    <lineage>
        <taxon>Bacteria</taxon>
        <taxon>Bacillati</taxon>
        <taxon>Bacillota</taxon>
        <taxon>Bacilli</taxon>
        <taxon>Lactobacillales</taxon>
        <taxon>Streptococcaceae</taxon>
        <taxon>Streptococcus</taxon>
    </lineage>
</organism>
<evidence type="ECO:0000255" key="1">
    <source>
        <dbReference type="HAMAP-Rule" id="MF_00080"/>
    </source>
</evidence>
<sequence>MKIIAKKDLFINDEIRVREVRLVGLEGEQLGIKPLSEAQSLADASNVDLVLIQPQAVPPVAKLMDYGKFKFEYQKKQKEQRKKQSVVTVKEVRLSPVIDKGDFETKLRNGRKFLEKGNKVKVSIRFKGRMITHKEIGAKVLADFAEATQDIAIIEQRAKMDGRQMFMQLAPISDNK</sequence>
<proteinExistence type="inferred from homology"/>
<reference key="1">
    <citation type="journal article" date="2006" name="Proc. Natl. Acad. Sci. U.S.A.">
        <title>Molecular genetic anatomy of inter- and intraserotype variation in the human bacterial pathogen group A Streptococcus.</title>
        <authorList>
            <person name="Beres S.B."/>
            <person name="Richter E.W."/>
            <person name="Nagiec M.J."/>
            <person name="Sumby P."/>
            <person name="Porcella S.F."/>
            <person name="DeLeo F.R."/>
            <person name="Musser J.M."/>
        </authorList>
    </citation>
    <scope>NUCLEOTIDE SEQUENCE [LARGE SCALE GENOMIC DNA]</scope>
    <source>
        <strain>MGAS10750</strain>
    </source>
</reference>
<dbReference type="EMBL" id="CP000262">
    <property type="protein sequence ID" value="ABF37656.1"/>
    <property type="molecule type" value="Genomic_DNA"/>
</dbReference>
<dbReference type="SMR" id="Q1J7B8"/>
<dbReference type="KEGG" id="spi:MGAS10750_Spy0706"/>
<dbReference type="HOGENOM" id="CLU_054919_3_2_9"/>
<dbReference type="Proteomes" id="UP000002434">
    <property type="component" value="Chromosome"/>
</dbReference>
<dbReference type="GO" id="GO:0005829">
    <property type="term" value="C:cytosol"/>
    <property type="evidence" value="ECO:0007669"/>
    <property type="project" value="TreeGrafter"/>
</dbReference>
<dbReference type="GO" id="GO:0016020">
    <property type="term" value="C:membrane"/>
    <property type="evidence" value="ECO:0007669"/>
    <property type="project" value="TreeGrafter"/>
</dbReference>
<dbReference type="GO" id="GO:0043022">
    <property type="term" value="F:ribosome binding"/>
    <property type="evidence" value="ECO:0007669"/>
    <property type="project" value="TreeGrafter"/>
</dbReference>
<dbReference type="GO" id="GO:0003743">
    <property type="term" value="F:translation initiation factor activity"/>
    <property type="evidence" value="ECO:0007669"/>
    <property type="project" value="UniProtKB-UniRule"/>
</dbReference>
<dbReference type="GO" id="GO:0032790">
    <property type="term" value="P:ribosome disassembly"/>
    <property type="evidence" value="ECO:0007669"/>
    <property type="project" value="TreeGrafter"/>
</dbReference>
<dbReference type="FunFam" id="3.10.20.80:FF:000001">
    <property type="entry name" value="Translation initiation factor IF-3"/>
    <property type="match status" value="1"/>
</dbReference>
<dbReference type="FunFam" id="3.30.110.10:FF:000001">
    <property type="entry name" value="Translation initiation factor IF-3"/>
    <property type="match status" value="1"/>
</dbReference>
<dbReference type="Gene3D" id="3.30.110.10">
    <property type="entry name" value="Translation initiation factor 3 (IF-3), C-terminal domain"/>
    <property type="match status" value="1"/>
</dbReference>
<dbReference type="Gene3D" id="3.10.20.80">
    <property type="entry name" value="Translation initiation factor 3 (IF-3), N-terminal domain"/>
    <property type="match status" value="1"/>
</dbReference>
<dbReference type="HAMAP" id="MF_00080">
    <property type="entry name" value="IF_3"/>
    <property type="match status" value="1"/>
</dbReference>
<dbReference type="InterPro" id="IPR036788">
    <property type="entry name" value="T_IF-3_C_sf"/>
</dbReference>
<dbReference type="InterPro" id="IPR036787">
    <property type="entry name" value="T_IF-3_N_sf"/>
</dbReference>
<dbReference type="InterPro" id="IPR019813">
    <property type="entry name" value="Translation_initiation_fac3_CS"/>
</dbReference>
<dbReference type="InterPro" id="IPR001288">
    <property type="entry name" value="Translation_initiation_fac_3"/>
</dbReference>
<dbReference type="InterPro" id="IPR019815">
    <property type="entry name" value="Translation_initiation_fac_3_C"/>
</dbReference>
<dbReference type="InterPro" id="IPR019814">
    <property type="entry name" value="Translation_initiation_fac_3_N"/>
</dbReference>
<dbReference type="NCBIfam" id="TIGR00168">
    <property type="entry name" value="infC"/>
    <property type="match status" value="1"/>
</dbReference>
<dbReference type="PANTHER" id="PTHR10938">
    <property type="entry name" value="TRANSLATION INITIATION FACTOR IF-3"/>
    <property type="match status" value="1"/>
</dbReference>
<dbReference type="PANTHER" id="PTHR10938:SF0">
    <property type="entry name" value="TRANSLATION INITIATION FACTOR IF-3, MITOCHONDRIAL"/>
    <property type="match status" value="1"/>
</dbReference>
<dbReference type="Pfam" id="PF00707">
    <property type="entry name" value="IF3_C"/>
    <property type="match status" value="1"/>
</dbReference>
<dbReference type="Pfam" id="PF05198">
    <property type="entry name" value="IF3_N"/>
    <property type="match status" value="1"/>
</dbReference>
<dbReference type="SUPFAM" id="SSF55200">
    <property type="entry name" value="Translation initiation factor IF3, C-terminal domain"/>
    <property type="match status" value="1"/>
</dbReference>
<dbReference type="SUPFAM" id="SSF54364">
    <property type="entry name" value="Translation initiation factor IF3, N-terminal domain"/>
    <property type="match status" value="1"/>
</dbReference>
<dbReference type="PROSITE" id="PS00938">
    <property type="entry name" value="IF3"/>
    <property type="match status" value="1"/>
</dbReference>
<feature type="chain" id="PRO_1000004575" description="Translation initiation factor IF-3">
    <location>
        <begin position="1"/>
        <end position="176"/>
    </location>
</feature>
<protein>
    <recommendedName>
        <fullName evidence="1">Translation initiation factor IF-3</fullName>
    </recommendedName>
</protein>
<comment type="function">
    <text evidence="1">IF-3 binds to the 30S ribosomal subunit and shifts the equilibrium between 70S ribosomes and their 50S and 30S subunits in favor of the free subunits, thus enhancing the availability of 30S subunits on which protein synthesis initiation begins.</text>
</comment>
<comment type="subunit">
    <text evidence="1">Monomer.</text>
</comment>
<comment type="subcellular location">
    <subcellularLocation>
        <location evidence="1">Cytoplasm</location>
    </subcellularLocation>
</comment>
<comment type="similarity">
    <text evidence="1">Belongs to the IF-3 family.</text>
</comment>
<gene>
    <name evidence="1" type="primary">infC</name>
    <name type="ordered locus">MGAS10750_Spy0706</name>
</gene>
<keyword id="KW-0963">Cytoplasm</keyword>
<keyword id="KW-0396">Initiation factor</keyword>
<keyword id="KW-0648">Protein biosynthesis</keyword>
<accession>Q1J7B8</accession>
<name>IF3_STRPF</name>